<keyword id="KW-0025">Alternative splicing</keyword>
<keyword id="KW-1185">Reference proteome</keyword>
<organism>
    <name type="scientific">Arabidopsis thaliana</name>
    <name type="common">Mouse-ear cress</name>
    <dbReference type="NCBI Taxonomy" id="3702"/>
    <lineage>
        <taxon>Eukaryota</taxon>
        <taxon>Viridiplantae</taxon>
        <taxon>Streptophyta</taxon>
        <taxon>Embryophyta</taxon>
        <taxon>Tracheophyta</taxon>
        <taxon>Spermatophyta</taxon>
        <taxon>Magnoliopsida</taxon>
        <taxon>eudicotyledons</taxon>
        <taxon>Gunneridae</taxon>
        <taxon>Pentapetalae</taxon>
        <taxon>rosids</taxon>
        <taxon>malvids</taxon>
        <taxon>Brassicales</taxon>
        <taxon>Brassicaceae</taxon>
        <taxon>Camelineae</taxon>
        <taxon>Arabidopsis</taxon>
    </lineage>
</organism>
<feature type="chain" id="PRO_0000423627" description="QWRF motif-containing protein 6">
    <location>
        <begin position="1"/>
        <end position="442"/>
    </location>
</feature>
<feature type="region of interest" description="Disordered" evidence="1">
    <location>
        <begin position="1"/>
        <end position="144"/>
    </location>
</feature>
<feature type="region of interest" description="Disordered" evidence="1">
    <location>
        <begin position="221"/>
        <end position="240"/>
    </location>
</feature>
<feature type="short sequence motif" description="QWRF motif">
    <location>
        <begin position="264"/>
        <end position="267"/>
    </location>
</feature>
<feature type="compositionally biased region" description="Basic residues" evidence="1">
    <location>
        <begin position="57"/>
        <end position="66"/>
    </location>
</feature>
<feature type="compositionally biased region" description="Basic and acidic residues" evidence="1">
    <location>
        <begin position="80"/>
        <end position="89"/>
    </location>
</feature>
<feature type="splice variant" id="VSP_053221" description="In isoform 2." evidence="2">
    <original>VLNLSLHKLKNVL</original>
    <variation>IEECSMRSQLIQQTTKEESSSK</variation>
    <location>
        <begin position="430"/>
        <end position="442"/>
    </location>
</feature>
<feature type="sequence conflict" description="In Ref. 3; AAT67586." evidence="2" ref="3">
    <original>PP</original>
    <variation>LS</variation>
    <location>
        <begin position="134"/>
        <end position="135"/>
    </location>
</feature>
<feature type="sequence conflict" description="In Ref. 3; AAT67586." evidence="2" ref="3">
    <original>T</original>
    <variation>I</variation>
    <location>
        <position position="148"/>
    </location>
</feature>
<gene>
    <name type="primary">QWRF6</name>
    <name type="ordered locus">At3g60000</name>
    <name type="ORF">F24G16.270</name>
</gene>
<comment type="alternative products">
    <event type="alternative splicing"/>
    <isoform>
        <id>Q5BPM6-1</id>
        <name>1</name>
        <sequence type="displayed"/>
    </isoform>
    <isoform>
        <id>Q5BPM6-2</id>
        <name>2</name>
        <sequence type="described" ref="VSP_053221"/>
    </isoform>
</comment>
<comment type="similarity">
    <text evidence="2">Belongs to the QWRF family.</text>
</comment>
<sequence>MEAKTSGPKQIQPSTPAPPPSTRRPRVREVSSRFMSPVTSSSSSAGDLHSLTCNSPKQHHLQHHQIQRSVSAQRLRRQLKMADGDENRSSETAARSLDSPFTLSQSRKSSKPSHLKPLNENSHRLETPTPMVPPPPSRSRLSQQRLPTATRLLQLSGISACYEKEGIINIQEKPKSNGSDQFPTLSCRTHLKVFNNPVPSSLNRSVSSPSSSCNVRESSSFSRLGLPLPPMAPKVPADTKKQRKVTEQLEDVHSLKLLHNRYLQWRFANANAQVKTQTHKTQTETMIHSFGSKISELHDSVQRKRIELQRLLKTKALLAITESQTPCLEQWSAIEEEYSTSVSQTIQAFSNASLRLPLDGDIMVDSKQLGDGLVAASKIVDGITQNVGNYMPKAKEMESLLSELTRVARSERSLTENCVVALLKTQASQVLNLSLHKLKNVL</sequence>
<evidence type="ECO:0000256" key="1">
    <source>
        <dbReference type="SAM" id="MobiDB-lite"/>
    </source>
</evidence>
<evidence type="ECO:0000305" key="2"/>
<protein>
    <recommendedName>
        <fullName>QWRF motif-containing protein 6</fullName>
    </recommendedName>
</protein>
<dbReference type="EMBL" id="AL138647">
    <property type="protein sequence ID" value="CAB75819.1"/>
    <property type="molecule type" value="Genomic_DNA"/>
</dbReference>
<dbReference type="EMBL" id="CP002686">
    <property type="protein sequence ID" value="AEE80000.1"/>
    <property type="molecule type" value="Genomic_DNA"/>
</dbReference>
<dbReference type="EMBL" id="CP002686">
    <property type="protein sequence ID" value="AEE80001.1"/>
    <property type="molecule type" value="Genomic_DNA"/>
</dbReference>
<dbReference type="EMBL" id="AY630787">
    <property type="protein sequence ID" value="AAT67586.1"/>
    <property type="molecule type" value="mRNA"/>
</dbReference>
<dbReference type="EMBL" id="AY924802">
    <property type="protein sequence ID" value="AAX23877.1"/>
    <property type="molecule type" value="mRNA"/>
</dbReference>
<dbReference type="PIR" id="T47824">
    <property type="entry name" value="T47824"/>
</dbReference>
<dbReference type="RefSeq" id="NP_001118860.1">
    <molecule id="Q5BPM6-2"/>
    <property type="nucleotide sequence ID" value="NM_001125388.1"/>
</dbReference>
<dbReference type="RefSeq" id="NP_191559.2">
    <molecule id="Q5BPM6-1"/>
    <property type="nucleotide sequence ID" value="NM_115863.4"/>
</dbReference>
<dbReference type="PaxDb" id="3702-AT3G60000.2"/>
<dbReference type="EnsemblPlants" id="AT3G60000.1">
    <molecule id="Q5BPM6-1"/>
    <property type="protein sequence ID" value="AT3G60000.1"/>
    <property type="gene ID" value="AT3G60000"/>
</dbReference>
<dbReference type="EnsemblPlants" id="AT3G60000.2">
    <molecule id="Q5BPM6-2"/>
    <property type="protein sequence ID" value="AT3G60000.2"/>
    <property type="gene ID" value="AT3G60000"/>
</dbReference>
<dbReference type="GeneID" id="825170"/>
<dbReference type="Gramene" id="AT3G60000.1">
    <molecule id="Q5BPM6-1"/>
    <property type="protein sequence ID" value="AT3G60000.1"/>
    <property type="gene ID" value="AT3G60000"/>
</dbReference>
<dbReference type="Gramene" id="AT3G60000.2">
    <molecule id="Q5BPM6-2"/>
    <property type="protein sequence ID" value="AT3G60000.2"/>
    <property type="gene ID" value="AT3G60000"/>
</dbReference>
<dbReference type="KEGG" id="ath:AT3G60000"/>
<dbReference type="Araport" id="AT3G60000"/>
<dbReference type="TAIR" id="AT3G60000">
    <property type="gene designation" value="QWRF6"/>
</dbReference>
<dbReference type="eggNOG" id="ENOG502R98H">
    <property type="taxonomic scope" value="Eukaryota"/>
</dbReference>
<dbReference type="InParanoid" id="Q5BPM6"/>
<dbReference type="OMA" id="PHPTSNK"/>
<dbReference type="OrthoDB" id="542108at2759"/>
<dbReference type="PhylomeDB" id="Q5BPM6"/>
<dbReference type="PRO" id="PR:Q5BPM6"/>
<dbReference type="Proteomes" id="UP000006548">
    <property type="component" value="Chromosome 3"/>
</dbReference>
<dbReference type="ExpressionAtlas" id="Q5BPM6">
    <property type="expression patterns" value="baseline and differential"/>
</dbReference>
<dbReference type="InterPro" id="IPR007573">
    <property type="entry name" value="QWRF"/>
</dbReference>
<dbReference type="PANTHER" id="PTHR31807">
    <property type="entry name" value="AUGMIN FAMILY MEMBER"/>
    <property type="match status" value="1"/>
</dbReference>
<dbReference type="PANTHER" id="PTHR31807:SF6">
    <property type="entry name" value="PROTEIN ENDOSPERM DEFECTIVE 1-RELATED"/>
    <property type="match status" value="1"/>
</dbReference>
<dbReference type="Pfam" id="PF04484">
    <property type="entry name" value="QWRF"/>
    <property type="match status" value="1"/>
</dbReference>
<name>QWRF6_ARATH</name>
<proteinExistence type="evidence at transcript level"/>
<reference key="1">
    <citation type="journal article" date="2000" name="Nature">
        <title>Sequence and analysis of chromosome 3 of the plant Arabidopsis thaliana.</title>
        <authorList>
            <person name="Salanoubat M."/>
            <person name="Lemcke K."/>
            <person name="Rieger M."/>
            <person name="Ansorge W."/>
            <person name="Unseld M."/>
            <person name="Fartmann B."/>
            <person name="Valle G."/>
            <person name="Bloecker H."/>
            <person name="Perez-Alonso M."/>
            <person name="Obermaier B."/>
            <person name="Delseny M."/>
            <person name="Boutry M."/>
            <person name="Grivell L.A."/>
            <person name="Mache R."/>
            <person name="Puigdomenech P."/>
            <person name="De Simone V."/>
            <person name="Choisne N."/>
            <person name="Artiguenave F."/>
            <person name="Robert C."/>
            <person name="Brottier P."/>
            <person name="Wincker P."/>
            <person name="Cattolico L."/>
            <person name="Weissenbach J."/>
            <person name="Saurin W."/>
            <person name="Quetier F."/>
            <person name="Schaefer M."/>
            <person name="Mueller-Auer S."/>
            <person name="Gabel C."/>
            <person name="Fuchs M."/>
            <person name="Benes V."/>
            <person name="Wurmbach E."/>
            <person name="Drzonek H."/>
            <person name="Erfle H."/>
            <person name="Jordan N."/>
            <person name="Bangert S."/>
            <person name="Wiedelmann R."/>
            <person name="Kranz H."/>
            <person name="Voss H."/>
            <person name="Holland R."/>
            <person name="Brandt P."/>
            <person name="Nyakatura G."/>
            <person name="Vezzi A."/>
            <person name="D'Angelo M."/>
            <person name="Pallavicini A."/>
            <person name="Toppo S."/>
            <person name="Simionati B."/>
            <person name="Conrad A."/>
            <person name="Hornischer K."/>
            <person name="Kauer G."/>
            <person name="Loehnert T.-H."/>
            <person name="Nordsiek G."/>
            <person name="Reichelt J."/>
            <person name="Scharfe M."/>
            <person name="Schoen O."/>
            <person name="Bargues M."/>
            <person name="Terol J."/>
            <person name="Climent J."/>
            <person name="Navarro P."/>
            <person name="Collado C."/>
            <person name="Perez-Perez A."/>
            <person name="Ottenwaelder B."/>
            <person name="Duchemin D."/>
            <person name="Cooke R."/>
            <person name="Laudie M."/>
            <person name="Berger-Llauro C."/>
            <person name="Purnelle B."/>
            <person name="Masuy D."/>
            <person name="de Haan M."/>
            <person name="Maarse A.C."/>
            <person name="Alcaraz J.-P."/>
            <person name="Cottet A."/>
            <person name="Casacuberta E."/>
            <person name="Monfort A."/>
            <person name="Argiriou A."/>
            <person name="Flores M."/>
            <person name="Liguori R."/>
            <person name="Vitale D."/>
            <person name="Mannhaupt G."/>
            <person name="Haase D."/>
            <person name="Schoof H."/>
            <person name="Rudd S."/>
            <person name="Zaccaria P."/>
            <person name="Mewes H.-W."/>
            <person name="Mayer K.F.X."/>
            <person name="Kaul S."/>
            <person name="Town C.D."/>
            <person name="Koo H.L."/>
            <person name="Tallon L.J."/>
            <person name="Jenkins J."/>
            <person name="Rooney T."/>
            <person name="Rizzo M."/>
            <person name="Walts A."/>
            <person name="Utterback T."/>
            <person name="Fujii C.Y."/>
            <person name="Shea T.P."/>
            <person name="Creasy T.H."/>
            <person name="Haas B."/>
            <person name="Maiti R."/>
            <person name="Wu D."/>
            <person name="Peterson J."/>
            <person name="Van Aken S."/>
            <person name="Pai G."/>
            <person name="Militscher J."/>
            <person name="Sellers P."/>
            <person name="Gill J.E."/>
            <person name="Feldblyum T.V."/>
            <person name="Preuss D."/>
            <person name="Lin X."/>
            <person name="Nierman W.C."/>
            <person name="Salzberg S.L."/>
            <person name="White O."/>
            <person name="Venter J.C."/>
            <person name="Fraser C.M."/>
            <person name="Kaneko T."/>
            <person name="Nakamura Y."/>
            <person name="Sato S."/>
            <person name="Kato T."/>
            <person name="Asamizu E."/>
            <person name="Sasamoto S."/>
            <person name="Kimura T."/>
            <person name="Idesawa K."/>
            <person name="Kawashima K."/>
            <person name="Kishida Y."/>
            <person name="Kiyokawa C."/>
            <person name="Kohara M."/>
            <person name="Matsumoto M."/>
            <person name="Matsuno A."/>
            <person name="Muraki A."/>
            <person name="Nakayama S."/>
            <person name="Nakazaki N."/>
            <person name="Shinpo S."/>
            <person name="Takeuchi C."/>
            <person name="Wada T."/>
            <person name="Watanabe A."/>
            <person name="Yamada M."/>
            <person name="Yasuda M."/>
            <person name="Tabata S."/>
        </authorList>
    </citation>
    <scope>NUCLEOTIDE SEQUENCE [LARGE SCALE GENOMIC DNA]</scope>
    <source>
        <strain>cv. Columbia</strain>
    </source>
</reference>
<reference key="2">
    <citation type="journal article" date="2017" name="Plant J.">
        <title>Araport11: a complete reannotation of the Arabidopsis thaliana reference genome.</title>
        <authorList>
            <person name="Cheng C.Y."/>
            <person name="Krishnakumar V."/>
            <person name="Chan A.P."/>
            <person name="Thibaud-Nissen F."/>
            <person name="Schobel S."/>
            <person name="Town C.D."/>
        </authorList>
    </citation>
    <scope>GENOME REANNOTATION</scope>
    <source>
        <strain>cv. Columbia</strain>
    </source>
</reference>
<reference key="3">
    <citation type="submission" date="2004-05" db="EMBL/GenBank/DDBJ databases">
        <authorList>
            <person name="Underwood B.A."/>
            <person name="Xiao Y.-L."/>
            <person name="Moskal W.A. Jr."/>
            <person name="Monaghan E.L."/>
            <person name="Wang W."/>
            <person name="Redman J.C."/>
            <person name="Wu H.C."/>
            <person name="Utterback T."/>
            <person name="Town C.D."/>
        </authorList>
    </citation>
    <scope>NUCLEOTIDE SEQUENCE [LARGE SCALE MRNA] (ISOFORM 1)</scope>
    <source>
        <strain>cv. Columbia</strain>
    </source>
</reference>
<reference key="4">
    <citation type="journal article" date="2010" name="Plant Cell">
        <title>The cytoskeleton and the peroxisomal-targeted snowy cotyledon3 protein are required for chloroplast development in Arabidopsis.</title>
        <authorList>
            <person name="Albrecht V."/>
            <person name="Simkova K."/>
            <person name="Carrie C."/>
            <person name="Delannoy E."/>
            <person name="Giraud E."/>
            <person name="Whelan J."/>
            <person name="Small I.D."/>
            <person name="Apel K."/>
            <person name="Badger M.R."/>
            <person name="Pogson B.J."/>
        </authorList>
    </citation>
    <scope>GENE FAMILY</scope>
    <scope>NOMENCLATURE</scope>
</reference>
<accession>Q5BPM6</accession>
<accession>Q6DYB8</accession>
<accession>Q9M1X6</accession>